<sequence length="349" mass="38258">MDDIMSPNFSIPSIGHAPTPIHHSLDADQQIEALPHQVYHPAALDPTPTATTTVQQQQQPDGNNGVSAADGSGGSNLFGHEPSIPLAHKQSYQPSASYQQQQQQQQNQSSNTGGTTPQSLMQPQTPQSMMSHMMPMTSAAPPDASLSNIHQTMGPSTPMTPATPGSADPGIVPQLQNIVSTVNLCCKLDLKKIALHARNAEYNPKRFAPVIMRIREPRTTALIFSSGKMVCTGAKGEDDSRLAARKYARIIQKLGFRAKFLDLKIQNMVGLCDVKFPIRLEGLVLTHCNFSRYEPELFPGLIYRMVRPRIVLLLPAPGKVVLTGAKVRQEIYDAFDKIFSILKKFKKQS</sequence>
<reference key="1">
    <citation type="journal article" date="1999" name="Korean J. Genet.">
        <title>Structure of Drosophila virilis TBP and TFIIB genes and comparison with the Drosophila melanogaster genes.</title>
        <authorList>
            <person name="Oh Y."/>
            <person name="Baek K."/>
            <person name="Yoon J."/>
        </authorList>
    </citation>
    <scope>NUCLEOTIDE SEQUENCE [GENOMIC DNA]</scope>
</reference>
<organism>
    <name type="scientific">Drosophila virilis</name>
    <name type="common">Fruit fly</name>
    <dbReference type="NCBI Taxonomy" id="7244"/>
    <lineage>
        <taxon>Eukaryota</taxon>
        <taxon>Metazoa</taxon>
        <taxon>Ecdysozoa</taxon>
        <taxon>Arthropoda</taxon>
        <taxon>Hexapoda</taxon>
        <taxon>Insecta</taxon>
        <taxon>Pterygota</taxon>
        <taxon>Neoptera</taxon>
        <taxon>Endopterygota</taxon>
        <taxon>Diptera</taxon>
        <taxon>Brachycera</taxon>
        <taxon>Muscomorpha</taxon>
        <taxon>Ephydroidea</taxon>
        <taxon>Drosophilidae</taxon>
        <taxon>Drosophila</taxon>
    </lineage>
</organism>
<protein>
    <recommendedName>
        <fullName>TATA-box-binding protein</fullName>
    </recommendedName>
    <alternativeName>
        <fullName>TATA sequence-binding protein</fullName>
    </alternativeName>
    <alternativeName>
        <fullName>TATA-binding factor</fullName>
    </alternativeName>
    <alternativeName>
        <fullName>TATA-box factor</fullName>
    </alternativeName>
    <alternativeName>
        <fullName>Transcription initiation factor TFIID TBP subunit</fullName>
    </alternativeName>
</protein>
<proteinExistence type="inferred from homology"/>
<comment type="function">
    <text evidence="2">General transcription factor that functions at the core of the DNA-binding multiprotein factor TFIID. Binding of TFIID to the TATA box is the initial transcriptional step of the pre-initiation complex (PIC), playing a role in the activation of eukaryotic genes transcribed by RNA polymerase II.</text>
</comment>
<comment type="subunit">
    <text evidence="2">Belongs to the TFIID complex which is composed of TATA binding protein (Tbp) and a number of TBP-associated factors (Tafs). Binds DNA as monomer. Interacts with TFIIA-L heterotrimer. Interacts with Taf1, Taf2, Taf5 and Taf12.</text>
</comment>
<comment type="subcellular location">
    <subcellularLocation>
        <location evidence="1">Nucleus</location>
    </subcellularLocation>
</comment>
<comment type="similarity">
    <text evidence="4">Belongs to the TBP family.</text>
</comment>
<accession>Q9NHP5</accession>
<feature type="chain" id="PRO_0000153965" description="TATA-box-binding protein">
    <location>
        <begin position="1"/>
        <end position="349"/>
    </location>
</feature>
<feature type="repeat" description="1">
    <location>
        <begin position="175"/>
        <end position="251"/>
    </location>
</feature>
<feature type="repeat" description="2">
    <location>
        <begin position="265"/>
        <end position="342"/>
    </location>
</feature>
<feature type="region of interest" description="Disordered" evidence="3">
    <location>
        <begin position="1"/>
        <end position="22"/>
    </location>
</feature>
<feature type="region of interest" description="Disordered" evidence="3">
    <location>
        <begin position="42"/>
        <end position="142"/>
    </location>
</feature>
<feature type="compositionally biased region" description="Low complexity" evidence="3">
    <location>
        <begin position="46"/>
        <end position="60"/>
    </location>
</feature>
<feature type="compositionally biased region" description="Low complexity" evidence="3">
    <location>
        <begin position="90"/>
        <end position="111"/>
    </location>
</feature>
<feature type="compositionally biased region" description="Polar residues" evidence="3">
    <location>
        <begin position="112"/>
        <end position="130"/>
    </location>
</feature>
<name>TBP_DROVI</name>
<dbReference type="EMBL" id="AF220262">
    <property type="protein sequence ID" value="AAF71711.1"/>
    <property type="molecule type" value="Genomic_DNA"/>
</dbReference>
<dbReference type="SMR" id="Q9NHP5"/>
<dbReference type="eggNOG" id="KOG3302">
    <property type="taxonomic scope" value="Eukaryota"/>
</dbReference>
<dbReference type="OrthoDB" id="2127950at2759"/>
<dbReference type="GO" id="GO:0005634">
    <property type="term" value="C:nucleus"/>
    <property type="evidence" value="ECO:0000250"/>
    <property type="project" value="UniProtKB"/>
</dbReference>
<dbReference type="GO" id="GO:0005669">
    <property type="term" value="C:transcription factor TFIID complex"/>
    <property type="evidence" value="ECO:0000250"/>
    <property type="project" value="UniProtKB"/>
</dbReference>
<dbReference type="GO" id="GO:0003677">
    <property type="term" value="F:DNA binding"/>
    <property type="evidence" value="ECO:0007669"/>
    <property type="project" value="UniProtKB-KW"/>
</dbReference>
<dbReference type="GO" id="GO:0000995">
    <property type="term" value="F:RNA polymerase III general transcription initiation factor activity"/>
    <property type="evidence" value="ECO:0000250"/>
    <property type="project" value="UniProtKB"/>
</dbReference>
<dbReference type="GO" id="GO:0006352">
    <property type="term" value="P:DNA-templated transcription initiation"/>
    <property type="evidence" value="ECO:0007669"/>
    <property type="project" value="InterPro"/>
</dbReference>
<dbReference type="GO" id="GO:0006366">
    <property type="term" value="P:transcription by RNA polymerase II"/>
    <property type="evidence" value="ECO:0000250"/>
    <property type="project" value="UniProtKB"/>
</dbReference>
<dbReference type="GO" id="GO:0006383">
    <property type="term" value="P:transcription by RNA polymerase III"/>
    <property type="evidence" value="ECO:0000250"/>
    <property type="project" value="UniProtKB"/>
</dbReference>
<dbReference type="CDD" id="cd04516">
    <property type="entry name" value="TBP_eukaryotes"/>
    <property type="match status" value="1"/>
</dbReference>
<dbReference type="FunFam" id="3.30.310.10:FF:000001">
    <property type="entry name" value="TATA-box-binding protein 2"/>
    <property type="match status" value="1"/>
</dbReference>
<dbReference type="FunFam" id="3.30.310.10:FF:000002">
    <property type="entry name" value="TATA-box-binding protein 2"/>
    <property type="match status" value="1"/>
</dbReference>
<dbReference type="Gene3D" id="3.30.310.10">
    <property type="entry name" value="TATA-Binding Protein"/>
    <property type="match status" value="2"/>
</dbReference>
<dbReference type="HAMAP" id="MF_00408">
    <property type="entry name" value="TATA_bind_prot_arch"/>
    <property type="match status" value="1"/>
</dbReference>
<dbReference type="InterPro" id="IPR000814">
    <property type="entry name" value="TBP"/>
</dbReference>
<dbReference type="InterPro" id="IPR012295">
    <property type="entry name" value="TBP_dom_sf"/>
</dbReference>
<dbReference type="InterPro" id="IPR033710">
    <property type="entry name" value="TBP_eukaryotic"/>
</dbReference>
<dbReference type="PANTHER" id="PTHR10126">
    <property type="entry name" value="TATA-BOX BINDING PROTEIN"/>
    <property type="match status" value="1"/>
</dbReference>
<dbReference type="Pfam" id="PF00352">
    <property type="entry name" value="TBP"/>
    <property type="match status" value="2"/>
</dbReference>
<dbReference type="PRINTS" id="PR00686">
    <property type="entry name" value="TIFACTORIID"/>
</dbReference>
<dbReference type="SUPFAM" id="SSF55945">
    <property type="entry name" value="TATA-box binding protein-like"/>
    <property type="match status" value="2"/>
</dbReference>
<dbReference type="PROSITE" id="PS00351">
    <property type="entry name" value="TFIID"/>
    <property type="match status" value="1"/>
</dbReference>
<gene>
    <name type="primary">Tbp</name>
</gene>
<evidence type="ECO:0000250" key="1">
    <source>
        <dbReference type="UniProtKB" id="P20226"/>
    </source>
</evidence>
<evidence type="ECO:0000250" key="2">
    <source>
        <dbReference type="UniProtKB" id="P20227"/>
    </source>
</evidence>
<evidence type="ECO:0000256" key="3">
    <source>
        <dbReference type="SAM" id="MobiDB-lite"/>
    </source>
</evidence>
<evidence type="ECO:0000305" key="4"/>
<keyword id="KW-0238">DNA-binding</keyword>
<keyword id="KW-0539">Nucleus</keyword>
<keyword id="KW-0677">Repeat</keyword>
<keyword id="KW-0804">Transcription</keyword>